<feature type="chain" id="PRO_1000075728" description="Ribonuclease 3">
    <location>
        <begin position="1"/>
        <end position="245"/>
    </location>
</feature>
<feature type="domain" description="RNase III" evidence="1">
    <location>
        <begin position="18"/>
        <end position="146"/>
    </location>
</feature>
<feature type="domain" description="DRBM" evidence="1">
    <location>
        <begin position="173"/>
        <end position="242"/>
    </location>
</feature>
<feature type="active site" evidence="1">
    <location>
        <position position="63"/>
    </location>
</feature>
<feature type="active site" evidence="1">
    <location>
        <position position="135"/>
    </location>
</feature>
<feature type="binding site" evidence="1">
    <location>
        <position position="59"/>
    </location>
    <ligand>
        <name>Mg(2+)</name>
        <dbReference type="ChEBI" id="CHEBI:18420"/>
    </ligand>
</feature>
<feature type="binding site" evidence="1">
    <location>
        <position position="132"/>
    </location>
    <ligand>
        <name>Mg(2+)</name>
        <dbReference type="ChEBI" id="CHEBI:18420"/>
    </ligand>
</feature>
<feature type="binding site" evidence="1">
    <location>
        <position position="135"/>
    </location>
    <ligand>
        <name>Mg(2+)</name>
        <dbReference type="ChEBI" id="CHEBI:18420"/>
    </ligand>
</feature>
<comment type="function">
    <text evidence="1">Digests double-stranded RNA. Involved in the processing of primary rRNA transcript to yield the immediate precursors to the large and small rRNAs (23S and 16S). Processes some mRNAs, and tRNAs when they are encoded in the rRNA operon. Processes pre-crRNA and tracrRNA of type II CRISPR loci if present in the organism.</text>
</comment>
<comment type="catalytic activity">
    <reaction evidence="1">
        <text>Endonucleolytic cleavage to 5'-phosphomonoester.</text>
        <dbReference type="EC" id="3.1.26.3"/>
    </reaction>
</comment>
<comment type="cofactor">
    <cofactor evidence="1">
        <name>Mg(2+)</name>
        <dbReference type="ChEBI" id="CHEBI:18420"/>
    </cofactor>
</comment>
<comment type="subunit">
    <text evidence="1">Homodimer.</text>
</comment>
<comment type="subcellular location">
    <subcellularLocation>
        <location evidence="1">Cytoplasm</location>
    </subcellularLocation>
</comment>
<comment type="similarity">
    <text evidence="1">Belongs to the ribonuclease III family.</text>
</comment>
<dbReference type="EC" id="3.1.26.3" evidence="1"/>
<dbReference type="EMBL" id="CP000395">
    <property type="protein sequence ID" value="ABH01978.1"/>
    <property type="molecule type" value="Genomic_DNA"/>
</dbReference>
<dbReference type="EMBL" id="CP002933">
    <property type="protein sequence ID" value="AEL69923.1"/>
    <property type="molecule type" value="Genomic_DNA"/>
</dbReference>
<dbReference type="RefSeq" id="WP_011601177.1">
    <property type="nucleotide sequence ID" value="NZ_CP160066.1"/>
</dbReference>
<dbReference type="SMR" id="Q0SMF0"/>
<dbReference type="STRING" id="29518.BLA32_00715"/>
<dbReference type="GeneID" id="77265557"/>
<dbReference type="KEGG" id="baf:BAPKO_0748"/>
<dbReference type="KEGG" id="bafz:BafPKo_0728"/>
<dbReference type="PATRIC" id="fig|390236.22.peg.696"/>
<dbReference type="eggNOG" id="COG0571">
    <property type="taxonomic scope" value="Bacteria"/>
</dbReference>
<dbReference type="HOGENOM" id="CLU_000907_1_3_12"/>
<dbReference type="OrthoDB" id="9805026at2"/>
<dbReference type="Proteomes" id="UP000005216">
    <property type="component" value="Chromosome"/>
</dbReference>
<dbReference type="GO" id="GO:0005737">
    <property type="term" value="C:cytoplasm"/>
    <property type="evidence" value="ECO:0007669"/>
    <property type="project" value="UniProtKB-SubCell"/>
</dbReference>
<dbReference type="GO" id="GO:0003725">
    <property type="term" value="F:double-stranded RNA binding"/>
    <property type="evidence" value="ECO:0007669"/>
    <property type="project" value="TreeGrafter"/>
</dbReference>
<dbReference type="GO" id="GO:0046872">
    <property type="term" value="F:metal ion binding"/>
    <property type="evidence" value="ECO:0007669"/>
    <property type="project" value="UniProtKB-KW"/>
</dbReference>
<dbReference type="GO" id="GO:0004525">
    <property type="term" value="F:ribonuclease III activity"/>
    <property type="evidence" value="ECO:0007669"/>
    <property type="project" value="UniProtKB-UniRule"/>
</dbReference>
<dbReference type="GO" id="GO:0019843">
    <property type="term" value="F:rRNA binding"/>
    <property type="evidence" value="ECO:0007669"/>
    <property type="project" value="UniProtKB-KW"/>
</dbReference>
<dbReference type="GO" id="GO:0006397">
    <property type="term" value="P:mRNA processing"/>
    <property type="evidence" value="ECO:0007669"/>
    <property type="project" value="UniProtKB-UniRule"/>
</dbReference>
<dbReference type="GO" id="GO:0010468">
    <property type="term" value="P:regulation of gene expression"/>
    <property type="evidence" value="ECO:0007669"/>
    <property type="project" value="TreeGrafter"/>
</dbReference>
<dbReference type="GO" id="GO:0006364">
    <property type="term" value="P:rRNA processing"/>
    <property type="evidence" value="ECO:0007669"/>
    <property type="project" value="UniProtKB-UniRule"/>
</dbReference>
<dbReference type="GO" id="GO:0008033">
    <property type="term" value="P:tRNA processing"/>
    <property type="evidence" value="ECO:0007669"/>
    <property type="project" value="UniProtKB-KW"/>
</dbReference>
<dbReference type="CDD" id="cd10845">
    <property type="entry name" value="DSRM_RNAse_III_family"/>
    <property type="match status" value="1"/>
</dbReference>
<dbReference type="CDD" id="cd00593">
    <property type="entry name" value="RIBOc"/>
    <property type="match status" value="1"/>
</dbReference>
<dbReference type="FunFam" id="1.10.1520.10:FF:000001">
    <property type="entry name" value="Ribonuclease 3"/>
    <property type="match status" value="1"/>
</dbReference>
<dbReference type="FunFam" id="3.30.160.20:FF:000003">
    <property type="entry name" value="Ribonuclease 3"/>
    <property type="match status" value="1"/>
</dbReference>
<dbReference type="Gene3D" id="3.30.160.20">
    <property type="match status" value="1"/>
</dbReference>
<dbReference type="Gene3D" id="1.10.1520.10">
    <property type="entry name" value="Ribonuclease III domain"/>
    <property type="match status" value="1"/>
</dbReference>
<dbReference type="HAMAP" id="MF_00104">
    <property type="entry name" value="RNase_III"/>
    <property type="match status" value="1"/>
</dbReference>
<dbReference type="InterPro" id="IPR014720">
    <property type="entry name" value="dsRBD_dom"/>
</dbReference>
<dbReference type="InterPro" id="IPR011907">
    <property type="entry name" value="RNase_III"/>
</dbReference>
<dbReference type="InterPro" id="IPR000999">
    <property type="entry name" value="RNase_III_dom"/>
</dbReference>
<dbReference type="InterPro" id="IPR036389">
    <property type="entry name" value="RNase_III_sf"/>
</dbReference>
<dbReference type="NCBIfam" id="TIGR02191">
    <property type="entry name" value="RNaseIII"/>
    <property type="match status" value="1"/>
</dbReference>
<dbReference type="PANTHER" id="PTHR11207:SF0">
    <property type="entry name" value="RIBONUCLEASE 3"/>
    <property type="match status" value="1"/>
</dbReference>
<dbReference type="PANTHER" id="PTHR11207">
    <property type="entry name" value="RIBONUCLEASE III"/>
    <property type="match status" value="1"/>
</dbReference>
<dbReference type="Pfam" id="PF00035">
    <property type="entry name" value="dsrm"/>
    <property type="match status" value="1"/>
</dbReference>
<dbReference type="Pfam" id="PF14622">
    <property type="entry name" value="Ribonucleas_3_3"/>
    <property type="match status" value="1"/>
</dbReference>
<dbReference type="SMART" id="SM00358">
    <property type="entry name" value="DSRM"/>
    <property type="match status" value="1"/>
</dbReference>
<dbReference type="SMART" id="SM00535">
    <property type="entry name" value="RIBOc"/>
    <property type="match status" value="1"/>
</dbReference>
<dbReference type="SUPFAM" id="SSF54768">
    <property type="entry name" value="dsRNA-binding domain-like"/>
    <property type="match status" value="1"/>
</dbReference>
<dbReference type="SUPFAM" id="SSF69065">
    <property type="entry name" value="RNase III domain-like"/>
    <property type="match status" value="1"/>
</dbReference>
<dbReference type="PROSITE" id="PS50137">
    <property type="entry name" value="DS_RBD"/>
    <property type="match status" value="1"/>
</dbReference>
<dbReference type="PROSITE" id="PS00517">
    <property type="entry name" value="RNASE_3_1"/>
    <property type="match status" value="1"/>
</dbReference>
<dbReference type="PROSITE" id="PS50142">
    <property type="entry name" value="RNASE_3_2"/>
    <property type="match status" value="1"/>
</dbReference>
<name>RNC_BORAP</name>
<protein>
    <recommendedName>
        <fullName evidence="1">Ribonuclease 3</fullName>
        <ecNumber evidence="1">3.1.26.3</ecNumber>
    </recommendedName>
    <alternativeName>
        <fullName evidence="1">Ribonuclease III</fullName>
        <shortName evidence="1">RNase III</shortName>
    </alternativeName>
</protein>
<sequence length="245" mass="27837">MKKNSSDFCFSNERKAQLSEFLENLSIDFNNFDLLNTALSHSSYSNELDQKSDNNERLEFLGDSVLNLIITDHLYKTYPNKSEGELSKARSYIVSEDSLSSIAREIDLGSYILLGRGEESNDGRNKKGILADAIEAFVGAIYLDSGFLIATEFVVGLFDMYIRLMFNRGDFKDYKSLLQEYVQKKYKISPNYKLDKEIGPDHDKVFCVELYVGEKFISNGKGKSKKEAEMRAAEVALKAMEDINL</sequence>
<proteinExistence type="inferred from homology"/>
<evidence type="ECO:0000255" key="1">
    <source>
        <dbReference type="HAMAP-Rule" id="MF_00104"/>
    </source>
</evidence>
<accession>Q0SMF0</accession>
<accession>G0IRF7</accession>
<organism>
    <name type="scientific">Borreliella afzelii (strain PKo)</name>
    <name type="common">Borrelia afzelii</name>
    <dbReference type="NCBI Taxonomy" id="390236"/>
    <lineage>
        <taxon>Bacteria</taxon>
        <taxon>Pseudomonadati</taxon>
        <taxon>Spirochaetota</taxon>
        <taxon>Spirochaetia</taxon>
        <taxon>Spirochaetales</taxon>
        <taxon>Borreliaceae</taxon>
        <taxon>Borreliella</taxon>
    </lineage>
</organism>
<gene>
    <name evidence="1" type="primary">rnc</name>
    <name type="ordered locus">BafPKo_0728</name>
    <name type="ordered locus">BAPKO_0748</name>
</gene>
<keyword id="KW-0963">Cytoplasm</keyword>
<keyword id="KW-0255">Endonuclease</keyword>
<keyword id="KW-0378">Hydrolase</keyword>
<keyword id="KW-0460">Magnesium</keyword>
<keyword id="KW-0479">Metal-binding</keyword>
<keyword id="KW-0507">mRNA processing</keyword>
<keyword id="KW-0540">Nuclease</keyword>
<keyword id="KW-0694">RNA-binding</keyword>
<keyword id="KW-0698">rRNA processing</keyword>
<keyword id="KW-0699">rRNA-binding</keyword>
<keyword id="KW-0819">tRNA processing</keyword>
<reference key="1">
    <citation type="journal article" date="2006" name="BMC Genomics">
        <title>Comparative genome analysis: selection pressure on the Borrelia vls cassettes is essential for infectivity.</title>
        <authorList>
            <person name="Gloeckner G."/>
            <person name="Schulte-Spechtel U."/>
            <person name="Schilhabel M."/>
            <person name="Felder M."/>
            <person name="Suehnel J."/>
            <person name="Wilske B."/>
            <person name="Platzer M."/>
        </authorList>
    </citation>
    <scope>NUCLEOTIDE SEQUENCE [LARGE SCALE GENOMIC DNA]</scope>
    <source>
        <strain>PKo</strain>
    </source>
</reference>
<reference key="2">
    <citation type="journal article" date="2011" name="J. Bacteriol.">
        <title>Whole-genome sequences of two Borrelia afzelii and two Borrelia garinii Lyme disease agent isolates.</title>
        <authorList>
            <person name="Casjens S.R."/>
            <person name="Mongodin E.F."/>
            <person name="Qiu W.G."/>
            <person name="Dunn J.J."/>
            <person name="Luft B.J."/>
            <person name="Fraser-Liggett C.M."/>
            <person name="Schutzer S.E."/>
        </authorList>
    </citation>
    <scope>NUCLEOTIDE SEQUENCE [LARGE SCALE GENOMIC DNA]</scope>
    <source>
        <strain>PKo</strain>
    </source>
</reference>